<name>THIM_LISMF</name>
<feature type="chain" id="PRO_0000156944" description="Hydroxyethylthiazole kinase">
    <location>
        <begin position="1"/>
        <end position="269"/>
    </location>
</feature>
<feature type="binding site" evidence="1">
    <location>
        <position position="42"/>
    </location>
    <ligand>
        <name>substrate</name>
    </ligand>
</feature>
<feature type="binding site" evidence="1">
    <location>
        <position position="118"/>
    </location>
    <ligand>
        <name>ATP</name>
        <dbReference type="ChEBI" id="CHEBI:30616"/>
    </ligand>
</feature>
<feature type="binding site" evidence="1">
    <location>
        <position position="164"/>
    </location>
    <ligand>
        <name>ATP</name>
        <dbReference type="ChEBI" id="CHEBI:30616"/>
    </ligand>
</feature>
<feature type="binding site" evidence="1">
    <location>
        <position position="191"/>
    </location>
    <ligand>
        <name>substrate</name>
    </ligand>
</feature>
<organism>
    <name type="scientific">Listeria monocytogenes serotype 4b (strain F2365)</name>
    <dbReference type="NCBI Taxonomy" id="265669"/>
    <lineage>
        <taxon>Bacteria</taxon>
        <taxon>Bacillati</taxon>
        <taxon>Bacillota</taxon>
        <taxon>Bacilli</taxon>
        <taxon>Bacillales</taxon>
        <taxon>Listeriaceae</taxon>
        <taxon>Listeria</taxon>
    </lineage>
</organism>
<proteinExistence type="inferred from homology"/>
<evidence type="ECO:0000255" key="1">
    <source>
        <dbReference type="HAMAP-Rule" id="MF_00228"/>
    </source>
</evidence>
<evidence type="ECO:0000305" key="2"/>
<sequence>MFDFMTLEKVWEKGPLVHNITNIVVANDSANGLLAIGASPIMGSAKEEMDELAKMADVLVINIGTLDGELVTAMKIAGRAANVAGTPVVLDPVGVGATSYRRKVVQELLAEIQFTAIRGNAGELAAIAGEAWEAKGVDAGVGSADVLSIAEKVANEWSTVVIISGEVDVISDGTRFAKVANGSALLPRITGSGCLLSAVCGSFMAVQDDAFRASVEACASYAVASEYAEIELERKLPGSFRPQFLDALASWSVEKTRAKAKIQESGEHK</sequence>
<protein>
    <recommendedName>
        <fullName evidence="1">Hydroxyethylthiazole kinase</fullName>
        <ecNumber evidence="1">2.7.1.50</ecNumber>
    </recommendedName>
    <alternativeName>
        <fullName evidence="1">4-methyl-5-beta-hydroxyethylthiazole kinase</fullName>
        <shortName evidence="1">TH kinase</shortName>
        <shortName evidence="1">Thz kinase</shortName>
    </alternativeName>
</protein>
<keyword id="KW-0067">ATP-binding</keyword>
<keyword id="KW-0418">Kinase</keyword>
<keyword id="KW-0460">Magnesium</keyword>
<keyword id="KW-0479">Metal-binding</keyword>
<keyword id="KW-0547">Nucleotide-binding</keyword>
<keyword id="KW-0784">Thiamine biosynthesis</keyword>
<keyword id="KW-0808">Transferase</keyword>
<dbReference type="EC" id="2.7.1.50" evidence="1"/>
<dbReference type="EMBL" id="AE017262">
    <property type="protein sequence ID" value="AAT03120.1"/>
    <property type="status" value="ALT_INIT"/>
    <property type="molecule type" value="Genomic_DNA"/>
</dbReference>
<dbReference type="RefSeq" id="WP_048813147.1">
    <property type="nucleotide sequence ID" value="NC_002973.6"/>
</dbReference>
<dbReference type="SMR" id="Q723Z1"/>
<dbReference type="KEGG" id="lmf:LMOf2365_0334"/>
<dbReference type="HOGENOM" id="CLU_019943_0_0_9"/>
<dbReference type="UniPathway" id="UPA00060">
    <property type="reaction ID" value="UER00139"/>
</dbReference>
<dbReference type="GO" id="GO:0005524">
    <property type="term" value="F:ATP binding"/>
    <property type="evidence" value="ECO:0007669"/>
    <property type="project" value="UniProtKB-UniRule"/>
</dbReference>
<dbReference type="GO" id="GO:0004417">
    <property type="term" value="F:hydroxyethylthiazole kinase activity"/>
    <property type="evidence" value="ECO:0007669"/>
    <property type="project" value="UniProtKB-UniRule"/>
</dbReference>
<dbReference type="GO" id="GO:0000287">
    <property type="term" value="F:magnesium ion binding"/>
    <property type="evidence" value="ECO:0007669"/>
    <property type="project" value="UniProtKB-UniRule"/>
</dbReference>
<dbReference type="GO" id="GO:0009228">
    <property type="term" value="P:thiamine biosynthetic process"/>
    <property type="evidence" value="ECO:0007669"/>
    <property type="project" value="UniProtKB-KW"/>
</dbReference>
<dbReference type="GO" id="GO:0009229">
    <property type="term" value="P:thiamine diphosphate biosynthetic process"/>
    <property type="evidence" value="ECO:0007669"/>
    <property type="project" value="UniProtKB-UniRule"/>
</dbReference>
<dbReference type="CDD" id="cd01170">
    <property type="entry name" value="THZ_kinase"/>
    <property type="match status" value="1"/>
</dbReference>
<dbReference type="Gene3D" id="3.40.1190.20">
    <property type="match status" value="1"/>
</dbReference>
<dbReference type="HAMAP" id="MF_00228">
    <property type="entry name" value="Thz_kinase"/>
    <property type="match status" value="1"/>
</dbReference>
<dbReference type="InterPro" id="IPR000417">
    <property type="entry name" value="Hyethyz_kinase"/>
</dbReference>
<dbReference type="InterPro" id="IPR029056">
    <property type="entry name" value="Ribokinase-like"/>
</dbReference>
<dbReference type="NCBIfam" id="NF006830">
    <property type="entry name" value="PRK09355.1"/>
    <property type="match status" value="1"/>
</dbReference>
<dbReference type="NCBIfam" id="TIGR00694">
    <property type="entry name" value="thiM"/>
    <property type="match status" value="1"/>
</dbReference>
<dbReference type="Pfam" id="PF02110">
    <property type="entry name" value="HK"/>
    <property type="match status" value="1"/>
</dbReference>
<dbReference type="PIRSF" id="PIRSF000513">
    <property type="entry name" value="Thz_kinase"/>
    <property type="match status" value="1"/>
</dbReference>
<dbReference type="PRINTS" id="PR01099">
    <property type="entry name" value="HYETHTZKNASE"/>
</dbReference>
<dbReference type="SUPFAM" id="SSF53613">
    <property type="entry name" value="Ribokinase-like"/>
    <property type="match status" value="1"/>
</dbReference>
<accession>Q723Z1</accession>
<reference key="1">
    <citation type="journal article" date="2004" name="Nucleic Acids Res.">
        <title>Whole genome comparisons of serotype 4b and 1/2a strains of the food-borne pathogen Listeria monocytogenes reveal new insights into the core genome components of this species.</title>
        <authorList>
            <person name="Nelson K.E."/>
            <person name="Fouts D.E."/>
            <person name="Mongodin E.F."/>
            <person name="Ravel J."/>
            <person name="DeBoy R.T."/>
            <person name="Kolonay J.F."/>
            <person name="Rasko D.A."/>
            <person name="Angiuoli S.V."/>
            <person name="Gill S.R."/>
            <person name="Paulsen I.T."/>
            <person name="Peterson J.D."/>
            <person name="White O."/>
            <person name="Nelson W.C."/>
            <person name="Nierman W.C."/>
            <person name="Beanan M.J."/>
            <person name="Brinkac L.M."/>
            <person name="Daugherty S.C."/>
            <person name="Dodson R.J."/>
            <person name="Durkin A.S."/>
            <person name="Madupu R."/>
            <person name="Haft D.H."/>
            <person name="Selengut J."/>
            <person name="Van Aken S.E."/>
            <person name="Khouri H.M."/>
            <person name="Fedorova N."/>
            <person name="Forberger H.A."/>
            <person name="Tran B."/>
            <person name="Kathariou S."/>
            <person name="Wonderling L.D."/>
            <person name="Uhlich G.A."/>
            <person name="Bayles D.O."/>
            <person name="Luchansky J.B."/>
            <person name="Fraser C.M."/>
        </authorList>
    </citation>
    <scope>NUCLEOTIDE SEQUENCE [LARGE SCALE GENOMIC DNA]</scope>
    <source>
        <strain>F2365</strain>
    </source>
</reference>
<comment type="function">
    <text evidence="1">Catalyzes the phosphorylation of the hydroxyl group of 4-methyl-5-beta-hydroxyethylthiazole (THZ).</text>
</comment>
<comment type="catalytic activity">
    <reaction evidence="1">
        <text>5-(2-hydroxyethyl)-4-methylthiazole + ATP = 4-methyl-5-(2-phosphooxyethyl)-thiazole + ADP + H(+)</text>
        <dbReference type="Rhea" id="RHEA:24212"/>
        <dbReference type="ChEBI" id="CHEBI:15378"/>
        <dbReference type="ChEBI" id="CHEBI:17957"/>
        <dbReference type="ChEBI" id="CHEBI:30616"/>
        <dbReference type="ChEBI" id="CHEBI:58296"/>
        <dbReference type="ChEBI" id="CHEBI:456216"/>
        <dbReference type="EC" id="2.7.1.50"/>
    </reaction>
</comment>
<comment type="cofactor">
    <cofactor evidence="1">
        <name>Mg(2+)</name>
        <dbReference type="ChEBI" id="CHEBI:18420"/>
    </cofactor>
</comment>
<comment type="pathway">
    <text evidence="1">Cofactor biosynthesis; thiamine diphosphate biosynthesis; 4-methyl-5-(2-phosphoethyl)-thiazole from 5-(2-hydroxyethyl)-4-methylthiazole: step 1/1.</text>
</comment>
<comment type="similarity">
    <text evidence="1">Belongs to the Thz kinase family.</text>
</comment>
<comment type="sequence caution" evidence="2">
    <conflict type="erroneous initiation">
        <sequence resource="EMBL-CDS" id="AAT03120"/>
    </conflict>
</comment>
<gene>
    <name evidence="1" type="primary">thiM</name>
    <name type="ordered locus">LMOf2365_0334</name>
</gene>